<name>ATX2_ARATH</name>
<accession>P0CB22</accession>
<accession>Q8RXL4</accession>
<accession>Q9MA43</accession>
<protein>
    <recommendedName>
        <fullName evidence="16">Histone-lysine N-methyltransferase ATX2</fullName>
        <ecNumber evidence="14">2.1.1.-</ecNumber>
    </recommendedName>
    <alternativeName>
        <fullName evidence="17">Protein SET DOMAIN GROUP 30</fullName>
    </alternativeName>
    <alternativeName>
        <fullName evidence="16">Trithorax-homolog protein 2</fullName>
        <shortName evidence="16">TRX-homolog protein 2</shortName>
    </alternativeName>
</protein>
<reference key="1">
    <citation type="journal article" date="2000" name="Nature">
        <title>Sequence and analysis of chromosome 1 of the plant Arabidopsis thaliana.</title>
        <authorList>
            <person name="Theologis A."/>
            <person name="Ecker J.R."/>
            <person name="Palm C.J."/>
            <person name="Federspiel N.A."/>
            <person name="Kaul S."/>
            <person name="White O."/>
            <person name="Alonso J."/>
            <person name="Altafi H."/>
            <person name="Araujo R."/>
            <person name="Bowman C.L."/>
            <person name="Brooks S.Y."/>
            <person name="Buehler E."/>
            <person name="Chan A."/>
            <person name="Chao Q."/>
            <person name="Chen H."/>
            <person name="Cheuk R.F."/>
            <person name="Chin C.W."/>
            <person name="Chung M.K."/>
            <person name="Conn L."/>
            <person name="Conway A.B."/>
            <person name="Conway A.R."/>
            <person name="Creasy T.H."/>
            <person name="Dewar K."/>
            <person name="Dunn P."/>
            <person name="Etgu P."/>
            <person name="Feldblyum T.V."/>
            <person name="Feng J.-D."/>
            <person name="Fong B."/>
            <person name="Fujii C.Y."/>
            <person name="Gill J.E."/>
            <person name="Goldsmith A.D."/>
            <person name="Haas B."/>
            <person name="Hansen N.F."/>
            <person name="Hughes B."/>
            <person name="Huizar L."/>
            <person name="Hunter J.L."/>
            <person name="Jenkins J."/>
            <person name="Johnson-Hopson C."/>
            <person name="Khan S."/>
            <person name="Khaykin E."/>
            <person name="Kim C.J."/>
            <person name="Koo H.L."/>
            <person name="Kremenetskaia I."/>
            <person name="Kurtz D.B."/>
            <person name="Kwan A."/>
            <person name="Lam B."/>
            <person name="Langin-Hooper S."/>
            <person name="Lee A."/>
            <person name="Lee J.M."/>
            <person name="Lenz C.A."/>
            <person name="Li J.H."/>
            <person name="Li Y.-P."/>
            <person name="Lin X."/>
            <person name="Liu S.X."/>
            <person name="Liu Z.A."/>
            <person name="Luros J.S."/>
            <person name="Maiti R."/>
            <person name="Marziali A."/>
            <person name="Militscher J."/>
            <person name="Miranda M."/>
            <person name="Nguyen M."/>
            <person name="Nierman W.C."/>
            <person name="Osborne B.I."/>
            <person name="Pai G."/>
            <person name="Peterson J."/>
            <person name="Pham P.K."/>
            <person name="Rizzo M."/>
            <person name="Rooney T."/>
            <person name="Rowley D."/>
            <person name="Sakano H."/>
            <person name="Salzberg S.L."/>
            <person name="Schwartz J.R."/>
            <person name="Shinn P."/>
            <person name="Southwick A.M."/>
            <person name="Sun H."/>
            <person name="Tallon L.J."/>
            <person name="Tambunga G."/>
            <person name="Toriumi M.J."/>
            <person name="Town C.D."/>
            <person name="Utterback T."/>
            <person name="Van Aken S."/>
            <person name="Vaysberg M."/>
            <person name="Vysotskaia V.S."/>
            <person name="Walker M."/>
            <person name="Wu D."/>
            <person name="Yu G."/>
            <person name="Fraser C.M."/>
            <person name="Venter J.C."/>
            <person name="Davis R.W."/>
        </authorList>
    </citation>
    <scope>NUCLEOTIDE SEQUENCE [LARGE SCALE GENOMIC DNA]</scope>
    <source>
        <strain>cv. Columbia</strain>
    </source>
</reference>
<reference key="2">
    <citation type="journal article" date="2017" name="Plant J.">
        <title>Araport11: a complete reannotation of the Arabidopsis thaliana reference genome.</title>
        <authorList>
            <person name="Cheng C.Y."/>
            <person name="Krishnakumar V."/>
            <person name="Chan A.P."/>
            <person name="Thibaud-Nissen F."/>
            <person name="Schobel S."/>
            <person name="Town C.D."/>
        </authorList>
    </citation>
    <scope>GENOME REANNOTATION</scope>
    <source>
        <strain>cv. Columbia</strain>
    </source>
</reference>
<reference key="3">
    <citation type="submission" date="2006-07" db="EMBL/GenBank/DDBJ databases">
        <title>Large-scale analysis of RIKEN Arabidopsis full-length (RAFL) cDNAs.</title>
        <authorList>
            <person name="Totoki Y."/>
            <person name="Seki M."/>
            <person name="Ishida J."/>
            <person name="Nakajima M."/>
            <person name="Enju A."/>
            <person name="Kamiya A."/>
            <person name="Narusaka M."/>
            <person name="Shin-i T."/>
            <person name="Nakagawa M."/>
            <person name="Sakamoto N."/>
            <person name="Oishi K."/>
            <person name="Kohara Y."/>
            <person name="Kobayashi M."/>
            <person name="Toyoda A."/>
            <person name="Sakaki Y."/>
            <person name="Sakurai T."/>
            <person name="Iida K."/>
            <person name="Akiyama K."/>
            <person name="Satou M."/>
            <person name="Toyoda T."/>
            <person name="Konagaya A."/>
            <person name="Carninci P."/>
            <person name="Kawai J."/>
            <person name="Hayashizaki Y."/>
            <person name="Shinozaki K."/>
        </authorList>
    </citation>
    <scope>NUCLEOTIDE SEQUENCE [LARGE SCALE MRNA]</scope>
    <source>
        <strain>cv. Columbia</strain>
    </source>
</reference>
<reference key="4">
    <citation type="journal article" date="2001" name="Gene">
        <title>Two Arabidopsis homologs of the animal trithorax genes: a new structural domain is a signature feature of the trithorax gene family.</title>
        <authorList>
            <person name="Alvarez-Venegas R."/>
            <person name="Avramova Z."/>
        </authorList>
    </citation>
    <scope>TISSUE SPECIFICITY</scope>
</reference>
<reference key="5">
    <citation type="journal article" date="2001" name="Nucleic Acids Res.">
        <title>The Arabidopsis thaliana genome contains at least 29 active genes encoding SET domain proteins that can be assigned to four evolutionarily conserved classes.</title>
        <authorList>
            <person name="Baumbusch L.O."/>
            <person name="Thorstensen T."/>
            <person name="Krauss V."/>
            <person name="Fischer A."/>
            <person name="Naumann K."/>
            <person name="Assalkhou R."/>
            <person name="Schulz I."/>
            <person name="Reuter G."/>
            <person name="Aalen R.B."/>
        </authorList>
    </citation>
    <scope>NOMENCLATURE</scope>
</reference>
<reference key="6">
    <citation type="journal article" date="2008" name="Plant Cell">
        <title>The highly similar Arabidopsis homologs of trithorax ATX1 and ATX2 encode proteins with divergent biochemical functions.</title>
        <authorList>
            <person name="Saleh A."/>
            <person name="Alvarez-Venegas R."/>
            <person name="Yilmaz M."/>
            <person name="Le O."/>
            <person name="Hou G."/>
            <person name="Sadder M."/>
            <person name="Al-Abdallat A."/>
            <person name="Xia Y."/>
            <person name="Lu G."/>
            <person name="Ladunga I."/>
            <person name="Avramova Z."/>
        </authorList>
    </citation>
    <scope>FUNCTION</scope>
    <scope>DISRUPTION PHENOTYPE</scope>
    <scope>TISSUE SPECIFICITY</scope>
    <scope>DEVELOPMENTAL STAGE</scope>
    <scope>CATALYTIC ACTIVITY</scope>
    <source>
        <strain>cv. Columbia</strain>
    </source>
</reference>
<reference key="7">
    <citation type="journal article" date="2008" name="Plant Cell">
        <title>ARABIDOPSIS TRITHORAX1 dynamically regulates FLOWERING LOCUS C activation via histone 3 lysine 4 trimethylation.</title>
        <authorList>
            <person name="Pien S."/>
            <person name="Fleury D."/>
            <person name="Mylne J.S."/>
            <person name="Crevillen P."/>
            <person name="Inze D."/>
            <person name="Avramova Z."/>
            <person name="Dean C."/>
            <person name="Grossniklaus U."/>
        </authorList>
    </citation>
    <scope>FUNCTION</scope>
    <scope>DISRUPTION PHENOTYPE</scope>
    <source>
        <strain>cv. Columbia</strain>
        <strain>cv. Wassilewskija</strain>
    </source>
</reference>
<reference key="8">
    <citation type="journal article" date="2009" name="Int. J. Dev. Biol.">
        <title>Evolution and pleiotropy of TRITHORAX function in Arabidopsis.</title>
        <authorList>
            <person name="Avramova Z."/>
        </authorList>
    </citation>
    <scope>REVIEW</scope>
</reference>
<reference key="9">
    <citation type="journal article" date="2014" name="Curr. Opin. Plant Biol.">
        <title>ATX1/AtCOMPASS and the H3K4me3 marks: how do they activate Arabidopsis genes?</title>
        <authorList>
            <person name="Fromm M."/>
            <person name="Avramova Z."/>
        </authorList>
    </citation>
    <scope>REVIEW</scope>
</reference>
<reference key="10">
    <citation type="journal article" date="2014" name="New Phytol.">
        <title>Combinatorial functions of diverse histone methylations in Arabidopsis thaliana flowering time regulation.</title>
        <authorList>
            <person name="Shafiq S."/>
            <person name="Berr A."/>
            <person name="Shen W.-H."/>
        </authorList>
    </citation>
    <scope>FUNCTION</scope>
    <scope>DISRUPTION PHENOTYPE</scope>
    <source>
        <strain>cv. Columbia</strain>
    </source>
</reference>
<sequence>MISMSCVPKEEEGEDTQIKTELHDHAADNPVRYASLESVYSVSSSSSSLCCKTAAGSHKKVNALKLPMSDSFELQPHRRPEIVHVYCRRKRRRRRRRESFLELAILQNEGVERDDRIVKIESAELDDEKEEENKKKKQKKRRIGNGELMKLGVDSTTLSVSATPPLRGCRIKAVCSGNKQDGSSRSKRNTVKNQEKVVTASATAKKWVRLSYDGVDPKHFIGLQCKVFWPLDAVWYPGSIVGYNVETKHHIVKYGDGDGEELALRREKIKFLISRDDMELLNMKFGTNDVVVDGQDYDELVILAASFEECQDFEPRDIIWAKLTGHAMWPAIIVDESVIVKRKGLNNKISGGRSVLVQFFGTHDFARIQVKQAVSFLKGLLSRSPLKCKQPRFEEAMEEAKMYLKEYKLPGRMDQLQKVADTDCSERINSGEEDSSNSGDDYTKDGEVWLRPTELGDCLHRIGDLQIINLGRIVTDSEFFKDSKHTWPEGYTATRKFISLKDPNASAMYKMEVLRDAESKTRPVFRVTTNSGEQFKGDTPSACWNKIYNRIKKIQIASDNPDVLGEGLHESGTDMFGFSNPEVDKLIQGLLQSRPPSKVSQRKYSSGKYQDHPTGYRPVRVEWKDLDKCNVCHMDEEYENNLFLQCDKCRMMVHTRCYGQLEPHNGILWLCNLCRPVALDIPPRCCLCPVVGGAMKPTTDGRWAHLACAIWIPETCLLDVKKMEPIDGVKKVSKDRWKLLCSICGVSYGACIQCSNNTCRVAYHPLCARAAGLCVELADEDRLFLLSMDDDEADQCIRLLSFCKRHRQTSNYHLETEYMIKPAHNIAEYLPPPNPSGCARTEPYNYLGRRGRKEPEALAGASSKRLFVENQPYIVGGYSRHEFSTYERIYGSKMSQITTPSNILSMAEKYTFMKETYRKRLAFGKSGIHGFGIFAKLPHRAGDMVIEYTGELVRPPIADKREHLIYNSMVGAGTYMFRIDNERVIDATRTGSIAHLINHSCEPNCYSRVISVNGDEHIIIFAKRDVAKWEELTYDYRFFSIDERLACYCGFPRCRGVVNDTEAEERQANIHASRCELKEWTES</sequence>
<feature type="chain" id="PRO_0000233355" description="Histone-lysine N-methyltransferase ATX2">
    <location>
        <begin position="1"/>
        <end position="1083"/>
    </location>
</feature>
<feature type="domain" description="PWWP" evidence="5">
    <location>
        <begin position="315"/>
        <end position="379"/>
    </location>
</feature>
<feature type="domain" description="FYR N-terminal" evidence="8">
    <location>
        <begin position="457"/>
        <end position="516"/>
    </location>
</feature>
<feature type="domain" description="FYR C-terminal" evidence="9">
    <location>
        <begin position="520"/>
        <end position="604"/>
    </location>
</feature>
<feature type="domain" description="SET" evidence="6">
    <location>
        <begin position="919"/>
        <end position="1037"/>
    </location>
</feature>
<feature type="domain" description="Post-SET" evidence="4">
    <location>
        <begin position="1043"/>
        <end position="1059"/>
    </location>
</feature>
<feature type="zinc finger region" description="PHD-type 1" evidence="3">
    <location>
        <begin position="626"/>
        <end position="677"/>
    </location>
</feature>
<feature type="zinc finger region" description="C2HC pre-PHD-type" evidence="10">
    <location>
        <begin position="682"/>
        <end position="715"/>
    </location>
</feature>
<feature type="zinc finger region" description="PHD-type 2" evidence="10">
    <location>
        <begin position="739"/>
        <end position="807"/>
    </location>
</feature>
<feature type="region of interest" description="Disordered" evidence="11">
    <location>
        <begin position="422"/>
        <end position="443"/>
    </location>
</feature>
<feature type="region of interest" description="Extended PHD domain (ePHD)" evidence="10">
    <location>
        <begin position="682"/>
        <end position="807"/>
    </location>
</feature>
<feature type="short sequence motif" description="Nuclear localization signal" evidence="7">
    <location>
        <begin position="77"/>
        <end position="84"/>
    </location>
</feature>
<feature type="binding site" evidence="6">
    <location>
        <position position="929"/>
    </location>
    <ligand>
        <name>S-adenosyl-L-methionine</name>
        <dbReference type="ChEBI" id="CHEBI:59789"/>
    </ligand>
</feature>
<feature type="binding site" evidence="6">
    <location>
        <position position="975"/>
    </location>
    <ligand>
        <name>S-adenosyl-L-methionine</name>
        <dbReference type="ChEBI" id="CHEBI:59789"/>
    </ligand>
</feature>
<feature type="binding site" evidence="1">
    <location>
        <begin position="998"/>
        <end position="999"/>
    </location>
    <ligand>
        <name>S-adenosyl-L-methionine</name>
        <dbReference type="ChEBI" id="CHEBI:59789"/>
    </ligand>
</feature>
<feature type="binding site" evidence="6">
    <location>
        <position position="1001"/>
    </location>
    <ligand>
        <name>Zn(2+)</name>
        <dbReference type="ChEBI" id="CHEBI:29105"/>
    </ligand>
</feature>
<feature type="binding site" evidence="6">
    <location>
        <position position="1036"/>
    </location>
    <ligand>
        <name>S-adenosyl-L-methionine</name>
        <dbReference type="ChEBI" id="CHEBI:59789"/>
    </ligand>
</feature>
<feature type="binding site" evidence="4">
    <location>
        <position position="1047"/>
    </location>
    <ligand>
        <name>Zn(2+)</name>
        <dbReference type="ChEBI" id="CHEBI:29105"/>
    </ligand>
</feature>
<feature type="binding site" evidence="4">
    <location>
        <position position="1049"/>
    </location>
    <ligand>
        <name>Zn(2+)</name>
        <dbReference type="ChEBI" id="CHEBI:29105"/>
    </ligand>
</feature>
<feature type="binding site" evidence="4">
    <location>
        <position position="1054"/>
    </location>
    <ligand>
        <name>Zn(2+)</name>
        <dbReference type="ChEBI" id="CHEBI:29105"/>
    </ligand>
</feature>
<feature type="glycosylation site" description="O-linked (GlcNAc) serine" evidence="2">
    <location>
        <position position="968"/>
    </location>
</feature>
<comment type="function">
    <text evidence="13 14 15">Histone methyltransferase (PubMed:18375658). Dimethylates 'Lys-4' of histone H3 (H3K4me2) (PubMed:18375658, PubMed:24102415). H3 'Lys-4' methylation represents a specific tag for epigenetic transcriptional activation (PubMed:18375658). Methylates only a limited fraction of nucleosomes of target genes (e.g. NAP and XTH33) (PubMed:18375658). Involved in epigenetic regulation of the floral repressor FLC and FT to prevent the transition from vegetative to reproductive development (PubMed:18375656, PubMed:24102415).</text>
</comment>
<comment type="catalytic activity">
    <reaction evidence="14">
        <text>N(6)-methyl-L-lysyl-[histone] + S-adenosyl-L-methionine = N(6),N(6)-dimethyl-L-lysyl-[histone] + S-adenosyl-L-homocysteine + H(+)</text>
        <dbReference type="Rhea" id="RHEA:21696"/>
        <dbReference type="Rhea" id="RHEA-COMP:9846"/>
        <dbReference type="Rhea" id="RHEA-COMP:15914"/>
        <dbReference type="ChEBI" id="CHEBI:15378"/>
        <dbReference type="ChEBI" id="CHEBI:57856"/>
        <dbReference type="ChEBI" id="CHEBI:59789"/>
        <dbReference type="ChEBI" id="CHEBI:61929"/>
        <dbReference type="ChEBI" id="CHEBI:61976"/>
    </reaction>
    <physiologicalReaction direction="left-to-right" evidence="14">
        <dbReference type="Rhea" id="RHEA:21697"/>
    </physiologicalReaction>
</comment>
<comment type="subcellular location">
    <subcellularLocation>
        <location evidence="7">Nucleus</location>
    </subcellularLocation>
</comment>
<comment type="tissue specificity">
    <text evidence="12 14">Expressed in roots, leaves and flowers and, to a lower extent, in young seedlings.</text>
</comment>
<comment type="developmental stage">
    <text evidence="13 14">Accumulates in adult plants, especially in rosette leaves and roots (but not in the vasculature and in tips) (PubMed:18375658). Weakly expressed in inflorescence nodes and at the base of the flowers (PubMed:18375658). In flowers, present in pollen and, at low levels, at the tips of the stigma (PubMed:18375658). In seedlings, observed in the vasculature and in the shoot apical meristems (PubMed:18375656).</text>
</comment>
<comment type="PTM">
    <text evidence="2">Activated via O-glycosylation.</text>
</comment>
<comment type="disruption phenotype">
    <text evidence="13 14 15">No obvious phenotype except a slightly delayed abscission of sepals and petals after fertilization (PubMed:18375658). Reduced dimethylated 'Lys-4' histone H3 (H3K4me2) but normal trimethylated 'Lys-4' histone H3 (H3K4me3) at FLC, FT, NAP and XTH33 nucleosomes (PubMed:18375658, PubMed:24102415). Accelerated transition from vegetative to reproductive development (early flowering), especially in medium-day conditions (12 hours light / 12 hours dark), due to FLC and FT epigenetic misregulation (PubMed:18375656, PubMed:24102415). Altered transcription levels of target genes (PubMed:18375658). Decreased XTH33 but normal WRKY70 transcript levels in atx2 plants (PubMed:18375658).</text>
</comment>
<comment type="similarity">
    <text evidence="6">Belongs to the class V-like SAM-binding methyltransferase superfamily. Histone-lysine methyltransferase family. TRX/MLL subfamily.</text>
</comment>
<comment type="sequence caution" evidence="18">
    <conflict type="erroneous gene model prediction">
        <sequence resource="EMBL-CDS" id="AAF29390"/>
    </conflict>
    <text>The predicted gene has been split into 2 genes: At1g05830 and At1g05835.</text>
</comment>
<comment type="sequence caution" evidence="18">
    <conflict type="frameshift">
        <sequence resource="EMBL" id="AK226560"/>
    </conflict>
</comment>
<gene>
    <name evidence="16" type="primary">ATX2</name>
    <name evidence="17" type="synonym">SDG30</name>
    <name evidence="17" type="synonym">SET30</name>
    <name evidence="19" type="ordered locus">At1g05830</name>
    <name evidence="20" type="ORF">T20M3.10</name>
</gene>
<organism>
    <name type="scientific">Arabidopsis thaliana</name>
    <name type="common">Mouse-ear cress</name>
    <dbReference type="NCBI Taxonomy" id="3702"/>
    <lineage>
        <taxon>Eukaryota</taxon>
        <taxon>Viridiplantae</taxon>
        <taxon>Streptophyta</taxon>
        <taxon>Embryophyta</taxon>
        <taxon>Tracheophyta</taxon>
        <taxon>Spermatophyta</taxon>
        <taxon>Magnoliopsida</taxon>
        <taxon>eudicotyledons</taxon>
        <taxon>Gunneridae</taxon>
        <taxon>Pentapetalae</taxon>
        <taxon>rosids</taxon>
        <taxon>malvids</taxon>
        <taxon>Brassicales</taxon>
        <taxon>Brassicaceae</taxon>
        <taxon>Camelineae</taxon>
        <taxon>Arabidopsis</taxon>
    </lineage>
</organism>
<proteinExistence type="evidence at protein level"/>
<dbReference type="EC" id="2.1.1.-" evidence="14"/>
<dbReference type="EMBL" id="AC009999">
    <property type="protein sequence ID" value="AAF29390.1"/>
    <property type="status" value="ALT_SEQ"/>
    <property type="molecule type" value="Genomic_DNA"/>
</dbReference>
<dbReference type="EMBL" id="CP002684">
    <property type="protein sequence ID" value="AEE27900.1"/>
    <property type="molecule type" value="Genomic_DNA"/>
</dbReference>
<dbReference type="EMBL" id="CP002684">
    <property type="protein sequence ID" value="AEE27901.1"/>
    <property type="molecule type" value="Genomic_DNA"/>
</dbReference>
<dbReference type="EMBL" id="CP002684">
    <property type="protein sequence ID" value="ANM59180.1"/>
    <property type="molecule type" value="Genomic_DNA"/>
</dbReference>
<dbReference type="EMBL" id="CP002684">
    <property type="protein sequence ID" value="ANM59181.1"/>
    <property type="molecule type" value="Genomic_DNA"/>
</dbReference>
<dbReference type="EMBL" id="AK226560">
    <property type="status" value="NOT_ANNOTATED_CDS"/>
    <property type="molecule type" value="mRNA"/>
</dbReference>
<dbReference type="PIR" id="A86193">
    <property type="entry name" value="A86193"/>
</dbReference>
<dbReference type="RefSeq" id="NP_001077464.4">
    <property type="nucleotide sequence ID" value="NM_001083995.4"/>
</dbReference>
<dbReference type="RefSeq" id="NP_001321563.1">
    <property type="nucleotide sequence ID" value="NM_001331587.1"/>
</dbReference>
<dbReference type="RefSeq" id="NP_001321564.1">
    <property type="nucleotide sequence ID" value="NM_001331588.1"/>
</dbReference>
<dbReference type="RefSeq" id="NP_172074.6">
    <property type="nucleotide sequence ID" value="NM_100464.7"/>
</dbReference>
<dbReference type="SMR" id="P0CB22"/>
<dbReference type="FunCoup" id="P0CB22">
    <property type="interactions" value="1105"/>
</dbReference>
<dbReference type="STRING" id="3702.P0CB22"/>
<dbReference type="GlyCosmos" id="P0CB22">
    <property type="glycosylation" value="1 site, No reported glycans"/>
</dbReference>
<dbReference type="GlyGen" id="P0CB22">
    <property type="glycosylation" value="2 sites"/>
</dbReference>
<dbReference type="iPTMnet" id="P0CB22"/>
<dbReference type="PaxDb" id="3702-AT1G05830.1"/>
<dbReference type="ProteomicsDB" id="240917"/>
<dbReference type="EnsemblPlants" id="AT1G05830.1">
    <property type="protein sequence ID" value="AT1G05830.1"/>
    <property type="gene ID" value="AT1G05830"/>
</dbReference>
<dbReference type="EnsemblPlants" id="AT1G05830.2">
    <property type="protein sequence ID" value="AT1G05830.2"/>
    <property type="gene ID" value="AT1G05830"/>
</dbReference>
<dbReference type="EnsemblPlants" id="AT1G05830.3">
    <property type="protein sequence ID" value="AT1G05830.3"/>
    <property type="gene ID" value="AT1G05830"/>
</dbReference>
<dbReference type="EnsemblPlants" id="AT1G05830.4">
    <property type="protein sequence ID" value="AT1G05830.4"/>
    <property type="gene ID" value="AT1G05830"/>
</dbReference>
<dbReference type="GeneID" id="837093"/>
<dbReference type="Gramene" id="AT1G05830.1">
    <property type="protein sequence ID" value="AT1G05830.1"/>
    <property type="gene ID" value="AT1G05830"/>
</dbReference>
<dbReference type="Gramene" id="AT1G05830.2">
    <property type="protein sequence ID" value="AT1G05830.2"/>
    <property type="gene ID" value="AT1G05830"/>
</dbReference>
<dbReference type="Gramene" id="AT1G05830.3">
    <property type="protein sequence ID" value="AT1G05830.3"/>
    <property type="gene ID" value="AT1G05830"/>
</dbReference>
<dbReference type="Gramene" id="AT1G05830.4">
    <property type="protein sequence ID" value="AT1G05830.4"/>
    <property type="gene ID" value="AT1G05830"/>
</dbReference>
<dbReference type="KEGG" id="ath:AT1G05830"/>
<dbReference type="Araport" id="AT1G05830"/>
<dbReference type="TAIR" id="AT1G05830">
    <property type="gene designation" value="ATX2"/>
</dbReference>
<dbReference type="eggNOG" id="KOG1080">
    <property type="taxonomic scope" value="Eukaryota"/>
</dbReference>
<dbReference type="HOGENOM" id="CLU_005729_0_0_1"/>
<dbReference type="InParanoid" id="P0CB22"/>
<dbReference type="OMA" id="PYIVSGF"/>
<dbReference type="PhylomeDB" id="P0CB22"/>
<dbReference type="PRO" id="PR:P0CB22"/>
<dbReference type="Proteomes" id="UP000006548">
    <property type="component" value="Chromosome 1"/>
</dbReference>
<dbReference type="ExpressionAtlas" id="P0CB22">
    <property type="expression patterns" value="baseline and differential"/>
</dbReference>
<dbReference type="GO" id="GO:0048188">
    <property type="term" value="C:Set1C/COMPASS complex"/>
    <property type="evidence" value="ECO:0000314"/>
    <property type="project" value="TAIR"/>
</dbReference>
<dbReference type="GO" id="GO:0140946">
    <property type="term" value="F:histone H3K4 dimethyltransferase activity"/>
    <property type="evidence" value="ECO:0000315"/>
    <property type="project" value="UniProtKB"/>
</dbReference>
<dbReference type="GO" id="GO:0042800">
    <property type="term" value="F:histone H3K4 methyltransferase activity"/>
    <property type="evidence" value="ECO:0000315"/>
    <property type="project" value="TAIR"/>
</dbReference>
<dbReference type="GO" id="GO:0008270">
    <property type="term" value="F:zinc ion binding"/>
    <property type="evidence" value="ECO:0007669"/>
    <property type="project" value="UniProtKB-KW"/>
</dbReference>
<dbReference type="GO" id="GO:0040029">
    <property type="term" value="P:epigenetic regulation of gene expression"/>
    <property type="evidence" value="ECO:0000315"/>
    <property type="project" value="UniProtKB"/>
</dbReference>
<dbReference type="GO" id="GO:0032259">
    <property type="term" value="P:methylation"/>
    <property type="evidence" value="ECO:0007669"/>
    <property type="project" value="UniProtKB-KW"/>
</dbReference>
<dbReference type="GO" id="GO:0006355">
    <property type="term" value="P:regulation of DNA-templated transcription"/>
    <property type="evidence" value="ECO:0000315"/>
    <property type="project" value="TAIR"/>
</dbReference>
<dbReference type="GO" id="GO:0010228">
    <property type="term" value="P:vegetative to reproductive phase transition of meristem"/>
    <property type="evidence" value="ECO:0000315"/>
    <property type="project" value="UniProtKB"/>
</dbReference>
<dbReference type="CDD" id="cd15662">
    <property type="entry name" value="ePHD_ATX1_2_like"/>
    <property type="match status" value="1"/>
</dbReference>
<dbReference type="CDD" id="cd15494">
    <property type="entry name" value="PHD_ATX1_2_like"/>
    <property type="match status" value="1"/>
</dbReference>
<dbReference type="CDD" id="cd20142">
    <property type="entry name" value="PWWP_AtATX1-like"/>
    <property type="match status" value="1"/>
</dbReference>
<dbReference type="CDD" id="cd10518">
    <property type="entry name" value="SET_SETD1-like"/>
    <property type="match status" value="1"/>
</dbReference>
<dbReference type="CDD" id="cd20404">
    <property type="entry name" value="Tudor_Agenet_AtEML-like"/>
    <property type="match status" value="1"/>
</dbReference>
<dbReference type="FunFam" id="2.170.270.10:FF:000040">
    <property type="entry name" value="Histone-lysine N-methyltransferase"/>
    <property type="match status" value="1"/>
</dbReference>
<dbReference type="FunFam" id="2.30.30.140:FF:000109">
    <property type="entry name" value="Histone-lysine N-methyltransferase"/>
    <property type="match status" value="1"/>
</dbReference>
<dbReference type="FunFam" id="3.30.160.360:FF:000008">
    <property type="entry name" value="Histone-lysine N-methyltransferase"/>
    <property type="match status" value="1"/>
</dbReference>
<dbReference type="FunFam" id="3.30.40.10:FF:000293">
    <property type="entry name" value="Histone-lysine N-methyltransferase"/>
    <property type="match status" value="1"/>
</dbReference>
<dbReference type="FunFam" id="3.30.40.10:FF:000299">
    <property type="entry name" value="Histone-lysine N-methyltransferase"/>
    <property type="match status" value="1"/>
</dbReference>
<dbReference type="Gene3D" id="2.30.30.140">
    <property type="match status" value="2"/>
</dbReference>
<dbReference type="Gene3D" id="3.30.160.360">
    <property type="match status" value="1"/>
</dbReference>
<dbReference type="Gene3D" id="2.170.270.10">
    <property type="entry name" value="SET domain"/>
    <property type="match status" value="1"/>
</dbReference>
<dbReference type="Gene3D" id="3.30.40.10">
    <property type="entry name" value="Zinc/RING finger domain, C3HC4 (zinc finger)"/>
    <property type="match status" value="2"/>
</dbReference>
<dbReference type="InterPro" id="IPR041956">
    <property type="entry name" value="ATX1/2_ePHD"/>
</dbReference>
<dbReference type="InterPro" id="IPR042010">
    <property type="entry name" value="ATX1/2_PHD"/>
</dbReference>
<dbReference type="InterPro" id="IPR034732">
    <property type="entry name" value="EPHD"/>
</dbReference>
<dbReference type="InterPro" id="IPR003889">
    <property type="entry name" value="FYrich_C"/>
</dbReference>
<dbReference type="InterPro" id="IPR003888">
    <property type="entry name" value="FYrich_N"/>
</dbReference>
<dbReference type="InterPro" id="IPR050701">
    <property type="entry name" value="Histone_Mod_Regulator"/>
</dbReference>
<dbReference type="InterPro" id="IPR003616">
    <property type="entry name" value="Post-SET_dom"/>
</dbReference>
<dbReference type="InterPro" id="IPR000313">
    <property type="entry name" value="PWWP_dom"/>
</dbReference>
<dbReference type="InterPro" id="IPR001214">
    <property type="entry name" value="SET_dom"/>
</dbReference>
<dbReference type="InterPro" id="IPR046341">
    <property type="entry name" value="SET_dom_sf"/>
</dbReference>
<dbReference type="InterPro" id="IPR019786">
    <property type="entry name" value="Zinc_finger_PHD-type_CS"/>
</dbReference>
<dbReference type="InterPro" id="IPR011011">
    <property type="entry name" value="Znf_FYVE_PHD"/>
</dbReference>
<dbReference type="InterPro" id="IPR001965">
    <property type="entry name" value="Znf_PHD"/>
</dbReference>
<dbReference type="InterPro" id="IPR019787">
    <property type="entry name" value="Znf_PHD-finger"/>
</dbReference>
<dbReference type="InterPro" id="IPR013083">
    <property type="entry name" value="Znf_RING/FYVE/PHD"/>
</dbReference>
<dbReference type="PANTHER" id="PTHR13793:SF140">
    <property type="entry name" value="HISTONE-LYSINE N-METHYLTRANSFERASE ATX2"/>
    <property type="match status" value="1"/>
</dbReference>
<dbReference type="PANTHER" id="PTHR13793">
    <property type="entry name" value="PHD FINGER PROTEINS"/>
    <property type="match status" value="1"/>
</dbReference>
<dbReference type="Pfam" id="PF05965">
    <property type="entry name" value="FYRC"/>
    <property type="match status" value="1"/>
</dbReference>
<dbReference type="Pfam" id="PF05964">
    <property type="entry name" value="FYRN"/>
    <property type="match status" value="1"/>
</dbReference>
<dbReference type="Pfam" id="PF00855">
    <property type="entry name" value="PWWP"/>
    <property type="match status" value="1"/>
</dbReference>
<dbReference type="Pfam" id="PF00856">
    <property type="entry name" value="SET"/>
    <property type="match status" value="1"/>
</dbReference>
<dbReference type="Pfam" id="PF13832">
    <property type="entry name" value="zf-HC5HC2H_2"/>
    <property type="match status" value="1"/>
</dbReference>
<dbReference type="SMART" id="SM00542">
    <property type="entry name" value="FYRC"/>
    <property type="match status" value="1"/>
</dbReference>
<dbReference type="SMART" id="SM00541">
    <property type="entry name" value="FYRN"/>
    <property type="match status" value="1"/>
</dbReference>
<dbReference type="SMART" id="SM00249">
    <property type="entry name" value="PHD"/>
    <property type="match status" value="2"/>
</dbReference>
<dbReference type="SMART" id="SM00293">
    <property type="entry name" value="PWWP"/>
    <property type="match status" value="1"/>
</dbReference>
<dbReference type="SMART" id="SM00317">
    <property type="entry name" value="SET"/>
    <property type="match status" value="1"/>
</dbReference>
<dbReference type="SUPFAM" id="SSF57903">
    <property type="entry name" value="FYVE/PHD zinc finger"/>
    <property type="match status" value="1"/>
</dbReference>
<dbReference type="SUPFAM" id="SSF82199">
    <property type="entry name" value="SET domain"/>
    <property type="match status" value="1"/>
</dbReference>
<dbReference type="SUPFAM" id="SSF63748">
    <property type="entry name" value="Tudor/PWWP/MBT"/>
    <property type="match status" value="1"/>
</dbReference>
<dbReference type="PROSITE" id="PS51805">
    <property type="entry name" value="EPHD"/>
    <property type="match status" value="1"/>
</dbReference>
<dbReference type="PROSITE" id="PS51543">
    <property type="entry name" value="FYRC"/>
    <property type="match status" value="1"/>
</dbReference>
<dbReference type="PROSITE" id="PS51542">
    <property type="entry name" value="FYRN"/>
    <property type="match status" value="1"/>
</dbReference>
<dbReference type="PROSITE" id="PS50868">
    <property type="entry name" value="POST_SET"/>
    <property type="match status" value="1"/>
</dbReference>
<dbReference type="PROSITE" id="PS50812">
    <property type="entry name" value="PWWP"/>
    <property type="match status" value="1"/>
</dbReference>
<dbReference type="PROSITE" id="PS50280">
    <property type="entry name" value="SET"/>
    <property type="match status" value="1"/>
</dbReference>
<dbReference type="PROSITE" id="PS01359">
    <property type="entry name" value="ZF_PHD_1"/>
    <property type="match status" value="1"/>
</dbReference>
<dbReference type="PROSITE" id="PS50016">
    <property type="entry name" value="ZF_PHD_2"/>
    <property type="match status" value="1"/>
</dbReference>
<keyword id="KW-0156">Chromatin regulator</keyword>
<keyword id="KW-0325">Glycoprotein</keyword>
<keyword id="KW-0479">Metal-binding</keyword>
<keyword id="KW-0489">Methyltransferase</keyword>
<keyword id="KW-0539">Nucleus</keyword>
<keyword id="KW-1185">Reference proteome</keyword>
<keyword id="KW-0677">Repeat</keyword>
<keyword id="KW-0949">S-adenosyl-L-methionine</keyword>
<keyword id="KW-0808">Transferase</keyword>
<keyword id="KW-0862">Zinc</keyword>
<keyword id="KW-0863">Zinc-finger</keyword>
<evidence type="ECO:0000250" key="1">
    <source>
        <dbReference type="UniProtKB" id="Q03164"/>
    </source>
</evidence>
<evidence type="ECO:0000250" key="2">
    <source>
        <dbReference type="UniProtKB" id="Q9C5X4"/>
    </source>
</evidence>
<evidence type="ECO:0000255" key="3">
    <source>
        <dbReference type="PROSITE-ProRule" id="PRU00146"/>
    </source>
</evidence>
<evidence type="ECO:0000255" key="4">
    <source>
        <dbReference type="PROSITE-ProRule" id="PRU00155"/>
    </source>
</evidence>
<evidence type="ECO:0000255" key="5">
    <source>
        <dbReference type="PROSITE-ProRule" id="PRU00162"/>
    </source>
</evidence>
<evidence type="ECO:0000255" key="6">
    <source>
        <dbReference type="PROSITE-ProRule" id="PRU00190"/>
    </source>
</evidence>
<evidence type="ECO:0000255" key="7">
    <source>
        <dbReference type="PROSITE-ProRule" id="PRU00768"/>
    </source>
</evidence>
<evidence type="ECO:0000255" key="8">
    <source>
        <dbReference type="PROSITE-ProRule" id="PRU00875"/>
    </source>
</evidence>
<evidence type="ECO:0000255" key="9">
    <source>
        <dbReference type="PROSITE-ProRule" id="PRU00876"/>
    </source>
</evidence>
<evidence type="ECO:0000255" key="10">
    <source>
        <dbReference type="PROSITE-ProRule" id="PRU01146"/>
    </source>
</evidence>
<evidence type="ECO:0000256" key="11">
    <source>
        <dbReference type="SAM" id="MobiDB-lite"/>
    </source>
</evidence>
<evidence type="ECO:0000269" key="12">
    <source>
    </source>
</evidence>
<evidence type="ECO:0000269" key="13">
    <source>
    </source>
</evidence>
<evidence type="ECO:0000269" key="14">
    <source>
    </source>
</evidence>
<evidence type="ECO:0000269" key="15">
    <source>
    </source>
</evidence>
<evidence type="ECO:0000303" key="16">
    <source>
    </source>
</evidence>
<evidence type="ECO:0000303" key="17">
    <source>
    </source>
</evidence>
<evidence type="ECO:0000305" key="18"/>
<evidence type="ECO:0000312" key="19">
    <source>
        <dbReference type="Araport" id="AT1G05830"/>
    </source>
</evidence>
<evidence type="ECO:0000312" key="20">
    <source>
        <dbReference type="EMBL" id="AAF29390.1"/>
    </source>
</evidence>